<evidence type="ECO:0000255" key="1">
    <source>
        <dbReference type="HAMAP-Rule" id="MF_01345"/>
    </source>
</evidence>
<evidence type="ECO:0000305" key="2"/>
<proteinExistence type="inferred from homology"/>
<accession>Q0I154</accession>
<comment type="function">
    <text evidence="1">One of the primary rRNA binding proteins, it binds specifically to the 5'-end of 16S ribosomal RNA.</text>
</comment>
<comment type="subunit">
    <text evidence="1">Part of the 30S ribosomal subunit.</text>
</comment>
<comment type="similarity">
    <text evidence="1">Belongs to the universal ribosomal protein uS17 family.</text>
</comment>
<gene>
    <name evidence="1" type="primary">rpsQ</name>
    <name type="ordered locus">HS_0068</name>
</gene>
<keyword id="KW-0687">Ribonucleoprotein</keyword>
<keyword id="KW-0689">Ribosomal protein</keyword>
<keyword id="KW-0694">RNA-binding</keyword>
<keyword id="KW-0699">rRNA-binding</keyword>
<dbReference type="EMBL" id="CP000436">
    <property type="protein sequence ID" value="ABI24349.1"/>
    <property type="molecule type" value="Genomic_DNA"/>
</dbReference>
<dbReference type="SMR" id="Q0I154"/>
<dbReference type="KEGG" id="hso:HS_0068"/>
<dbReference type="eggNOG" id="COG0186">
    <property type="taxonomic scope" value="Bacteria"/>
</dbReference>
<dbReference type="HOGENOM" id="CLU_073626_1_1_6"/>
<dbReference type="GO" id="GO:0022627">
    <property type="term" value="C:cytosolic small ribosomal subunit"/>
    <property type="evidence" value="ECO:0007669"/>
    <property type="project" value="TreeGrafter"/>
</dbReference>
<dbReference type="GO" id="GO:0019843">
    <property type="term" value="F:rRNA binding"/>
    <property type="evidence" value="ECO:0007669"/>
    <property type="project" value="UniProtKB-UniRule"/>
</dbReference>
<dbReference type="GO" id="GO:0003735">
    <property type="term" value="F:structural constituent of ribosome"/>
    <property type="evidence" value="ECO:0007669"/>
    <property type="project" value="InterPro"/>
</dbReference>
<dbReference type="GO" id="GO:0006412">
    <property type="term" value="P:translation"/>
    <property type="evidence" value="ECO:0007669"/>
    <property type="project" value="UniProtKB-UniRule"/>
</dbReference>
<dbReference type="CDD" id="cd00364">
    <property type="entry name" value="Ribosomal_uS17"/>
    <property type="match status" value="1"/>
</dbReference>
<dbReference type="FunFam" id="2.40.50.140:FF:000014">
    <property type="entry name" value="30S ribosomal protein S17"/>
    <property type="match status" value="1"/>
</dbReference>
<dbReference type="Gene3D" id="2.40.50.140">
    <property type="entry name" value="Nucleic acid-binding proteins"/>
    <property type="match status" value="1"/>
</dbReference>
<dbReference type="HAMAP" id="MF_01345_B">
    <property type="entry name" value="Ribosomal_uS17_B"/>
    <property type="match status" value="1"/>
</dbReference>
<dbReference type="InterPro" id="IPR012340">
    <property type="entry name" value="NA-bd_OB-fold"/>
</dbReference>
<dbReference type="InterPro" id="IPR000266">
    <property type="entry name" value="Ribosomal_uS17"/>
</dbReference>
<dbReference type="InterPro" id="IPR019984">
    <property type="entry name" value="Ribosomal_uS17_bact/chlr"/>
</dbReference>
<dbReference type="NCBIfam" id="NF004123">
    <property type="entry name" value="PRK05610.1"/>
    <property type="match status" value="1"/>
</dbReference>
<dbReference type="NCBIfam" id="TIGR03635">
    <property type="entry name" value="uS17_bact"/>
    <property type="match status" value="1"/>
</dbReference>
<dbReference type="PANTHER" id="PTHR10744">
    <property type="entry name" value="40S RIBOSOMAL PROTEIN S11 FAMILY MEMBER"/>
    <property type="match status" value="1"/>
</dbReference>
<dbReference type="PANTHER" id="PTHR10744:SF1">
    <property type="entry name" value="SMALL RIBOSOMAL SUBUNIT PROTEIN US17M"/>
    <property type="match status" value="1"/>
</dbReference>
<dbReference type="Pfam" id="PF00366">
    <property type="entry name" value="Ribosomal_S17"/>
    <property type="match status" value="1"/>
</dbReference>
<dbReference type="PRINTS" id="PR00973">
    <property type="entry name" value="RIBOSOMALS17"/>
</dbReference>
<dbReference type="SUPFAM" id="SSF50249">
    <property type="entry name" value="Nucleic acid-binding proteins"/>
    <property type="match status" value="1"/>
</dbReference>
<sequence length="84" mass="9592">MTDKIRTVQGKVISDKMDKSFVVAIERTVKHPIYGKFIRRTTKLHVHDEHNEAKLGDVVEVRGCRPLSKTKSHTLVRVVEKAQA</sequence>
<reference key="1">
    <citation type="journal article" date="2007" name="J. Bacteriol.">
        <title>Complete genome sequence of Haemophilus somnus (Histophilus somni) strain 129Pt and comparison to Haemophilus ducreyi 35000HP and Haemophilus influenzae Rd.</title>
        <authorList>
            <person name="Challacombe J.F."/>
            <person name="Duncan A.J."/>
            <person name="Brettin T.S."/>
            <person name="Bruce D."/>
            <person name="Chertkov O."/>
            <person name="Detter J.C."/>
            <person name="Han C.S."/>
            <person name="Misra M."/>
            <person name="Richardson P."/>
            <person name="Tapia R."/>
            <person name="Thayer N."/>
            <person name="Xie G."/>
            <person name="Inzana T.J."/>
        </authorList>
    </citation>
    <scope>NUCLEOTIDE SEQUENCE [LARGE SCALE GENOMIC DNA]</scope>
    <source>
        <strain>129Pt</strain>
    </source>
</reference>
<feature type="chain" id="PRO_1000054961" description="Small ribosomal subunit protein uS17">
    <location>
        <begin position="1"/>
        <end position="84"/>
    </location>
</feature>
<name>RS17_HISS1</name>
<protein>
    <recommendedName>
        <fullName evidence="1">Small ribosomal subunit protein uS17</fullName>
    </recommendedName>
    <alternativeName>
        <fullName evidence="2">30S ribosomal protein S17</fullName>
    </alternativeName>
</protein>
<organism>
    <name type="scientific">Histophilus somni (strain 129Pt)</name>
    <name type="common">Haemophilus somnus</name>
    <dbReference type="NCBI Taxonomy" id="205914"/>
    <lineage>
        <taxon>Bacteria</taxon>
        <taxon>Pseudomonadati</taxon>
        <taxon>Pseudomonadota</taxon>
        <taxon>Gammaproteobacteria</taxon>
        <taxon>Pasteurellales</taxon>
        <taxon>Pasteurellaceae</taxon>
        <taxon>Histophilus</taxon>
    </lineage>
</organism>